<reference key="1">
    <citation type="journal article" date="1997" name="Mol. Phylogenet. Evol.">
        <title>Molecular phylogeny of rodents, with special emphasis on murids: evidence from nuclear gene LCAT.</title>
        <authorList>
            <person name="Robinson M."/>
            <person name="Catzeflis F."/>
            <person name="Briolay J."/>
            <person name="Mouchiroud D."/>
        </authorList>
    </citation>
    <scope>NUCLEOTIDE SEQUENCE [GENOMIC DNA]</scope>
</reference>
<evidence type="ECO:0000250" key="1"/>
<evidence type="ECO:0000250" key="2">
    <source>
        <dbReference type="UniProtKB" id="P04180"/>
    </source>
</evidence>
<evidence type="ECO:0000255" key="3"/>
<evidence type="ECO:0000305" key="4"/>
<accession>O35573</accession>
<keyword id="KW-0012">Acyltransferase</keyword>
<keyword id="KW-0153">Cholesterol metabolism</keyword>
<keyword id="KW-1015">Disulfide bond</keyword>
<keyword id="KW-0325">Glycoprotein</keyword>
<keyword id="KW-0443">Lipid metabolism</keyword>
<keyword id="KW-0964">Secreted</keyword>
<keyword id="KW-0753">Steroid metabolism</keyword>
<keyword id="KW-1207">Sterol metabolism</keyword>
<keyword id="KW-0808">Transferase</keyword>
<sequence length="299" mass="34653">EDCFTIWLDLNIFLSLGVDCWIDNTRVIYNRSSGYMSNAPGVQIRVPGFGKTYSIEYLDDNKLAGYMHTLVQNLVNNAYVRDETVRAPPYDWRLEPRHQEEYYLKLAGLVEEMYATYGKPVFLIGHSLGFCHLLYFLLLQPQGIPIMSSIKLVEEQRITTTSPWMFPSHQVWPEDHVFISTPNFNYTFSDFQRFFADLHFEDGWYMWLQSRDLLAGLPAPGVEVYCLYGVGLPTPHTYMYDHGFPYTDPVGIIYEDGDDTVTTHSIELCSHWQGRQPQPVHLLPLRGTQHLNMVFSNKT</sequence>
<proteinExistence type="inferred from homology"/>
<gene>
    <name type="primary">LCAT</name>
</gene>
<name>LCAT_ELIQU</name>
<dbReference type="EC" id="2.3.1.43" evidence="2"/>
<dbReference type="EMBL" id="AH005254">
    <property type="protein sequence ID" value="AAB58999.1"/>
    <property type="molecule type" value="Genomic_DNA"/>
</dbReference>
<dbReference type="SMR" id="O35573"/>
<dbReference type="GlyCosmos" id="O35573">
    <property type="glycosylation" value="2 sites, No reported glycans"/>
</dbReference>
<dbReference type="GO" id="GO:0005576">
    <property type="term" value="C:extracellular region"/>
    <property type="evidence" value="ECO:0007669"/>
    <property type="project" value="UniProtKB-SubCell"/>
</dbReference>
<dbReference type="GO" id="GO:0004607">
    <property type="term" value="F:phosphatidylcholine-sterol O-acyltransferase activity"/>
    <property type="evidence" value="ECO:0000250"/>
    <property type="project" value="UniProtKB"/>
</dbReference>
<dbReference type="GO" id="GO:0008203">
    <property type="term" value="P:cholesterol metabolic process"/>
    <property type="evidence" value="ECO:0000250"/>
    <property type="project" value="UniProtKB"/>
</dbReference>
<dbReference type="GO" id="GO:0046470">
    <property type="term" value="P:phosphatidylcholine metabolic process"/>
    <property type="evidence" value="ECO:0000250"/>
    <property type="project" value="UniProtKB"/>
</dbReference>
<dbReference type="FunFam" id="3.40.50.1820:FF:000720">
    <property type="entry name" value="Phosphatidylcholine-sterol acyltransferase"/>
    <property type="match status" value="1"/>
</dbReference>
<dbReference type="Gene3D" id="3.40.50.1820">
    <property type="entry name" value="alpha/beta hydrolase"/>
    <property type="match status" value="2"/>
</dbReference>
<dbReference type="InterPro" id="IPR029058">
    <property type="entry name" value="AB_hydrolase_fold"/>
</dbReference>
<dbReference type="InterPro" id="IPR003386">
    <property type="entry name" value="LACT/PDAT_acylTrfase"/>
</dbReference>
<dbReference type="PANTHER" id="PTHR11440">
    <property type="entry name" value="LECITHIN-CHOLESTEROL ACYLTRANSFERASE-RELATED"/>
    <property type="match status" value="1"/>
</dbReference>
<dbReference type="Pfam" id="PF02450">
    <property type="entry name" value="LCAT"/>
    <property type="match status" value="2"/>
</dbReference>
<dbReference type="SUPFAM" id="SSF53474">
    <property type="entry name" value="alpha/beta-Hydrolases"/>
    <property type="match status" value="1"/>
</dbReference>
<organism>
    <name type="scientific">Eliomys quercinus</name>
    <name type="common">Garden dormouse</name>
    <dbReference type="NCBI Taxonomy" id="53277"/>
    <lineage>
        <taxon>Eukaryota</taxon>
        <taxon>Metazoa</taxon>
        <taxon>Chordata</taxon>
        <taxon>Craniata</taxon>
        <taxon>Vertebrata</taxon>
        <taxon>Euteleostomi</taxon>
        <taxon>Mammalia</taxon>
        <taxon>Eutheria</taxon>
        <taxon>Euarchontoglires</taxon>
        <taxon>Glires</taxon>
        <taxon>Rodentia</taxon>
        <taxon>Sciuromorpha</taxon>
        <taxon>Gliridae</taxon>
        <taxon>Leithiinae</taxon>
        <taxon>Eliomys</taxon>
    </lineage>
</organism>
<protein>
    <recommendedName>
        <fullName>Phosphatidylcholine-sterol acyltransferase</fullName>
        <ecNumber evidence="2">2.3.1.43</ecNumber>
    </recommendedName>
    <alternativeName>
        <fullName>Lecithin-cholesterol acyltransferase</fullName>
    </alternativeName>
    <alternativeName>
        <fullName>Phospholipid-cholesterol acyltransferase</fullName>
    </alternativeName>
</protein>
<comment type="function">
    <text evidence="2">Central enzyme in the extracellular metabolism of plasma lipoproteins. Synthesized mainly in the liver and secreted into plasma where it converts cholesterol and phosphatidylcholines (lecithins) to cholesteryl esters and lysophosphatidylcholines on the surface of high and low density lipoproteins (HDLs and LDLs). The cholesterol ester is then transported back to the liver. Has a preference for plasma 16:0-18:2 or 18:O-18:2 phosphatidylcholines. Also produced in the brain by primary astrocytes, and esterifies free cholesterol on nascent APOE-containing lipoproteins secreted from glia and influences cerebral spinal fluid (CSF) APOE- and APOA1 levels. Together with APOE and the cholesterol transporter ABCA1, plays a key role in the maturation of glial-derived, nascent lipoproteins. Required for remodeling high-density lipoprotein particles into their spherical forms (By similarity).</text>
</comment>
<comment type="catalytic activity">
    <reaction evidence="2">
        <text>a sterol + a 1,2-diacyl-sn-glycero-3-phosphocholine = a sterol ester + a 1-acyl-sn-glycero-3-phosphocholine</text>
        <dbReference type="Rhea" id="RHEA:21204"/>
        <dbReference type="ChEBI" id="CHEBI:15889"/>
        <dbReference type="ChEBI" id="CHEBI:35915"/>
        <dbReference type="ChEBI" id="CHEBI:57643"/>
        <dbReference type="ChEBI" id="CHEBI:58168"/>
        <dbReference type="EC" id="2.3.1.43"/>
    </reaction>
</comment>
<comment type="activity regulation">
    <text evidence="1">APOA1 is the most potent activator in plasma. Also activated by APOE, APOC1 and APOA4 (By similarity).</text>
</comment>
<comment type="subcellular location">
    <subcellularLocation>
        <location evidence="2">Secreted</location>
    </subcellularLocation>
    <text evidence="2">Secreted into blood plasma. Produced in astrocytes and secreted into cerebral spinal fluid (CSF) (By similarity).</text>
</comment>
<comment type="similarity">
    <text evidence="4">Belongs to the AB hydrolase superfamily. Lipase family.</text>
</comment>
<feature type="chain" id="PRO_0000090359" description="Phosphatidylcholine-sterol acyltransferase">
    <location>
        <begin position="1" status="less than"/>
        <end position="299" status="greater than"/>
    </location>
</feature>
<feature type="active site" description="Nucleophile" evidence="2">
    <location>
        <position position="127"/>
    </location>
</feature>
<feature type="active site" description="Charge relay system" evidence="2">
    <location>
        <position position="258"/>
    </location>
</feature>
<feature type="active site" description="Charge relay system" evidence="2">
    <location>
        <position position="290"/>
    </location>
</feature>
<feature type="site" description="Determinant for substrate specificity" evidence="2">
    <location>
        <position position="95"/>
    </location>
</feature>
<feature type="glycosylation site" description="N-linked (GlcNAc...) asparagine" evidence="3">
    <location>
        <position position="30"/>
    </location>
</feature>
<feature type="glycosylation site" description="N-linked (GlcNAc...) asparagine" evidence="3">
    <location>
        <position position="185"/>
    </location>
</feature>
<feature type="disulfide bond" evidence="2">
    <location>
        <begin position="226"/>
        <end position="269"/>
    </location>
</feature>
<feature type="non-terminal residue">
    <location>
        <position position="1"/>
    </location>
</feature>
<feature type="non-terminal residue">
    <location>
        <position position="299"/>
    </location>
</feature>